<evidence type="ECO:0000250" key="1">
    <source>
        <dbReference type="UniProtKB" id="P33650"/>
    </source>
</evidence>
<evidence type="ECO:0000255" key="2"/>
<evidence type="ECO:0000255" key="3">
    <source>
        <dbReference type="PROSITE-ProRule" id="PRU01048"/>
    </source>
</evidence>
<evidence type="ECO:0000269" key="4">
    <source>
    </source>
</evidence>
<evidence type="ECO:0000269" key="5">
    <source>
    </source>
</evidence>
<evidence type="ECO:0000303" key="6">
    <source>
    </source>
</evidence>
<evidence type="ECO:0000305" key="7"/>
<sequence length="613" mass="69036">MKKIKIALVGQPNVGKSLLINALCKANMKVGNFSGVTIEKASAKTFYKNYEFEVIDLPGTYSLDGYSEEEKITRHFLNQNDYDVIVNVLDATNLERNLILSAELLSLNKKMLLALNMCDEAKKEGIELDTSILSQEFQSQVVEISAKTKENLELLLQKIIILFESKFIPRSQFYTPLCEKSPEKEDLLYFINELSKKIITHKKEERNLTKKIDALLIHKFFGLPIFLFLMWLLFQLTFSLGQIPMDYIESGFNTLGEFVKNNISNTFIASALADGIIAGVGAVILFLPNIMILFLGIALLETTGYMSRVAFLLDGILHKFGLHGKSFIPLITGFGCSVPAFMATRTLKNKRDRLLTLFVINFMSCGARLPVYVLFIGAFFPSEKAGNYLFGIYILGAILGLCAAKFLRMTAFRGLDEPFVMEMPKYRMPNWHLVWFMVYNKAKMYLKKAGTFILLASLLIWFASNFPKSEENLNDFNAQERAIEQSYLGQFGKGIEPIFQPLELDWKLSVSLISGLAAKEVMISTMGVLYSLGKDVDETNNDLKGIIAKNIPIPSAVAFILFVMIYNPCFAATIVFSKESGKLKYTLFLFLFTCTSAYIVAFIGLHIAKILLN</sequence>
<protein>
    <recommendedName>
        <fullName evidence="6">Fe(2+) transporter FeoB</fullName>
    </recommendedName>
    <alternativeName>
        <fullName>Ferrous iron transport protein B homolog</fullName>
    </alternativeName>
</protein>
<reference key="1">
    <citation type="journal article" date="2003" name="Can. J. Microbiol.">
        <title>FeoB is not required for ferrous iron uptake in Campylobacter jejuni.</title>
        <authorList>
            <person name="Raphael B.H."/>
            <person name="Joens L.A."/>
        </authorList>
    </citation>
    <scope>NUCLEOTIDE SEQUENCE [GENOMIC DNA]</scope>
    <scope>NUCLEOTIDE SEQUENCE [GENOMIC DNA] OF 1-609</scope>
    <scope>FUNCTION</scope>
    <source>
        <strain>F38011</strain>
        <strain>M129</strain>
    </source>
</reference>
<reference key="2">
    <citation type="journal article" date="2000" name="Nature">
        <title>The genome sequence of the food-borne pathogen Campylobacter jejuni reveals hypervariable sequences.</title>
        <authorList>
            <person name="Parkhill J."/>
            <person name="Wren B.W."/>
            <person name="Mungall K.L."/>
            <person name="Ketley J.M."/>
            <person name="Churcher C.M."/>
            <person name="Basham D."/>
            <person name="Chillingworth T."/>
            <person name="Davies R.M."/>
            <person name="Feltwell T."/>
            <person name="Holroyd S."/>
            <person name="Jagels K."/>
            <person name="Karlyshev A.V."/>
            <person name="Moule S."/>
            <person name="Pallen M.J."/>
            <person name="Penn C.W."/>
            <person name="Quail M.A."/>
            <person name="Rajandream M.A."/>
            <person name="Rutherford K.M."/>
            <person name="van Vliet A.H.M."/>
            <person name="Whitehead S."/>
            <person name="Barrell B.G."/>
        </authorList>
    </citation>
    <scope>NUCLEOTIDE SEQUENCE [LARGE SCALE GENOMIC DNA]</scope>
    <source>
        <strain>ATCC 700819 / NCTC 11168</strain>
    </source>
</reference>
<reference key="3">
    <citation type="journal article" date="2006" name="Infect. Immun.">
        <title>Major role for FeoB in Campylobacter jejuni ferrous iron acquisition, gut colonization, and intracellular survival.</title>
        <authorList>
            <person name="Naikare H."/>
            <person name="Palyada K."/>
            <person name="Panciera R."/>
            <person name="Marlow D."/>
            <person name="Stintzi A."/>
        </authorList>
    </citation>
    <scope>FUNCTION</scope>
    <scope>INDUCTION</scope>
    <scope>OPERON</scope>
    <scope>DISRUPTION PHENOTYPE</scope>
    <source>
        <strain>81-176</strain>
        <strain>ATCC 43431 / TGH 9011 / Serotype O:3</strain>
        <strain>ATCC 700819 / NCTC 11168</strain>
    </source>
</reference>
<comment type="function">
    <text evidence="5">Probable transporter of a GTP-driven Fe(2+) uptake system across the cell inner membrane into the cytoplasm, shown for strain NCTC 11168 (PubMed:16988218).</text>
</comment>
<comment type="subcellular location">
    <subcellularLocation>
        <location evidence="1">Cell inner membrane</location>
        <topology evidence="1">Multi-pass membrane protein</topology>
    </subcellularLocation>
</comment>
<comment type="induction">
    <text evidence="5">Detected in iron-restricted, mid-log-phase cells, part of the feoA-feoB operon (strain NCTC 11168).</text>
</comment>
<comment type="disruption phenotype">
    <text evidence="5">Loss of 90% of Fe(2+) uptake into the cytoplasm, reduced growth rate in iron-limited medium, strain NCTC 11168; in iron-rich medium Fe(2+) uptake is not affected (PubMed:16988218). Reduced survival in human and pig epithelial cells after 3 days, strain 81-176 (PubMed:16988218). Reduced ability to colonize chick cecum, strains 81-176, ATCC 43431 and NCTC 11168 (PubMed:16988218). Outcompeted by wild-type bacteria in infection assays in piglets; the 3 different strains colonize different regions of the gut differently (PubMed:16988218).</text>
</comment>
<comment type="miscellaneous">
    <text>Fe(2+) ion uptake in diverse strains of C.jejuni is much lower than in E.coli and H.pylori. Site-directed mutations in FeoB cause no defect in Fe(2+) uptake.</text>
</comment>
<comment type="similarity">
    <text evidence="3">Belongs to the TRAFAC class TrmE-Era-EngA-EngB-Septin-like GTPase superfamily. FeoB GTPase (TC 9.A.8) family.</text>
</comment>
<comment type="caution">
    <text evidence="4 5">Has been reported not to be involved in Fe(2+) uptake in strains F38001 and M129, when the strains were grown in iron-containing medium (PubMed:14735223). When the feoB deletion strain of NCTC 11168 is grown in iron-containing medium Fe(2+) uptake occurs, suggesting the prior results in strain F38001 and M129 may not be correct (PubMed:16988218).</text>
</comment>
<comment type="sequence caution" evidence="7">
    <conflict type="erroneous termination">
        <sequence resource="EMBL-CDS" id="AAR20450"/>
    </conflict>
    <text>Truncated C-terminus. Strain F38011 sequence differs due to a recombination event that leads to a 68-bp deletion producing a stop codon at position 544.</text>
</comment>
<gene>
    <name type="primary">feoB</name>
    <name type="ordered locus">Cj1398</name>
</gene>
<accession>Q9PMQ9</accession>
<accession>Q0P8L6</accession>
<accession>Q6U206</accession>
<accession>Q6U6H3</accession>
<dbReference type="EMBL" id="AY380227">
    <property type="protein sequence ID" value="AAR20450.1"/>
    <property type="status" value="ALT_SEQ"/>
    <property type="molecule type" value="Genomic_DNA"/>
</dbReference>
<dbReference type="EMBL" id="AL111168">
    <property type="protein sequence ID" value="CAL35507.1"/>
    <property type="molecule type" value="Genomic_DNA"/>
</dbReference>
<dbReference type="EMBL" id="AY377919">
    <property type="protein sequence ID" value="AAQ88281.1"/>
    <property type="molecule type" value="Genomic_DNA"/>
</dbReference>
<dbReference type="PIR" id="F81284">
    <property type="entry name" value="F81284"/>
</dbReference>
<dbReference type="RefSeq" id="WP_002865443.1">
    <property type="nucleotide sequence ID" value="NZ_SZUC01000003.1"/>
</dbReference>
<dbReference type="RefSeq" id="YP_002344781.1">
    <property type="nucleotide sequence ID" value="NC_002163.1"/>
</dbReference>
<dbReference type="SMR" id="Q9PMQ9"/>
<dbReference type="STRING" id="192222.Cj1398"/>
<dbReference type="PaxDb" id="192222-Cj1398"/>
<dbReference type="EnsemblBacteria" id="CAL35507">
    <property type="protein sequence ID" value="CAL35507"/>
    <property type="gene ID" value="Cj1398"/>
</dbReference>
<dbReference type="GeneID" id="905687"/>
<dbReference type="KEGG" id="cje:Cj1398"/>
<dbReference type="PATRIC" id="fig|192222.6.peg.1379"/>
<dbReference type="eggNOG" id="COG0370">
    <property type="taxonomic scope" value="Bacteria"/>
</dbReference>
<dbReference type="HOGENOM" id="CLU_013350_3_2_7"/>
<dbReference type="OrthoDB" id="9809127at2"/>
<dbReference type="Proteomes" id="UP000000799">
    <property type="component" value="Chromosome"/>
</dbReference>
<dbReference type="GO" id="GO:0005886">
    <property type="term" value="C:plasma membrane"/>
    <property type="evidence" value="ECO:0007669"/>
    <property type="project" value="UniProtKB-SubCell"/>
</dbReference>
<dbReference type="GO" id="GO:0005524">
    <property type="term" value="F:ATP binding"/>
    <property type="evidence" value="ECO:0007669"/>
    <property type="project" value="UniProtKB-KW"/>
</dbReference>
<dbReference type="GO" id="GO:0015093">
    <property type="term" value="F:ferrous iron transmembrane transporter activity"/>
    <property type="evidence" value="ECO:0007669"/>
    <property type="project" value="InterPro"/>
</dbReference>
<dbReference type="GO" id="GO:0005525">
    <property type="term" value="F:GTP binding"/>
    <property type="evidence" value="ECO:0007669"/>
    <property type="project" value="UniProtKB-KW"/>
</dbReference>
<dbReference type="CDD" id="cd01879">
    <property type="entry name" value="FeoB"/>
    <property type="match status" value="1"/>
</dbReference>
<dbReference type="Gene3D" id="3.40.50.300">
    <property type="entry name" value="P-loop containing nucleotide triphosphate hydrolases"/>
    <property type="match status" value="1"/>
</dbReference>
<dbReference type="InterPro" id="IPR003373">
    <property type="entry name" value="Fe2_transport_prot-B"/>
</dbReference>
<dbReference type="InterPro" id="IPR011640">
    <property type="entry name" value="Fe2_transport_prot_B_C"/>
</dbReference>
<dbReference type="InterPro" id="IPR050860">
    <property type="entry name" value="FeoB_GTPase"/>
</dbReference>
<dbReference type="InterPro" id="IPR030389">
    <property type="entry name" value="G_FEOB_dom"/>
</dbReference>
<dbReference type="InterPro" id="IPR011642">
    <property type="entry name" value="Gate_dom"/>
</dbReference>
<dbReference type="InterPro" id="IPR027417">
    <property type="entry name" value="P-loop_NTPase"/>
</dbReference>
<dbReference type="InterPro" id="IPR005225">
    <property type="entry name" value="Small_GTP-bd"/>
</dbReference>
<dbReference type="NCBIfam" id="TIGR00437">
    <property type="entry name" value="feoB"/>
    <property type="match status" value="1"/>
</dbReference>
<dbReference type="NCBIfam" id="TIGR00231">
    <property type="entry name" value="small_GTP"/>
    <property type="match status" value="1"/>
</dbReference>
<dbReference type="PANTHER" id="PTHR43185:SF1">
    <property type="entry name" value="FE(2+) TRANSPORTER FEOB"/>
    <property type="match status" value="1"/>
</dbReference>
<dbReference type="PANTHER" id="PTHR43185">
    <property type="entry name" value="FERROUS IRON TRANSPORT PROTEIN B"/>
    <property type="match status" value="1"/>
</dbReference>
<dbReference type="Pfam" id="PF07664">
    <property type="entry name" value="FeoB_C"/>
    <property type="match status" value="1"/>
</dbReference>
<dbReference type="Pfam" id="PF02421">
    <property type="entry name" value="FeoB_N"/>
    <property type="match status" value="1"/>
</dbReference>
<dbReference type="Pfam" id="PF07670">
    <property type="entry name" value="Gate"/>
    <property type="match status" value="2"/>
</dbReference>
<dbReference type="SUPFAM" id="SSF52540">
    <property type="entry name" value="P-loop containing nucleoside triphosphate hydrolases"/>
    <property type="match status" value="1"/>
</dbReference>
<dbReference type="PROSITE" id="PS51711">
    <property type="entry name" value="G_FEOB"/>
    <property type="match status" value="1"/>
</dbReference>
<proteinExistence type="evidence at transcript level"/>
<organism>
    <name type="scientific">Campylobacter jejuni subsp. jejuni serotype O:2 (strain ATCC 700819 / NCTC 11168)</name>
    <dbReference type="NCBI Taxonomy" id="192222"/>
    <lineage>
        <taxon>Bacteria</taxon>
        <taxon>Pseudomonadati</taxon>
        <taxon>Campylobacterota</taxon>
        <taxon>Epsilonproteobacteria</taxon>
        <taxon>Campylobacterales</taxon>
        <taxon>Campylobacteraceae</taxon>
        <taxon>Campylobacter</taxon>
    </lineage>
</organism>
<keyword id="KW-0067">ATP-binding</keyword>
<keyword id="KW-0997">Cell inner membrane</keyword>
<keyword id="KW-1003">Cell membrane</keyword>
<keyword id="KW-0342">GTP-binding</keyword>
<keyword id="KW-0406">Ion transport</keyword>
<keyword id="KW-0408">Iron</keyword>
<keyword id="KW-0410">Iron transport</keyword>
<keyword id="KW-0472">Membrane</keyword>
<keyword id="KW-0547">Nucleotide-binding</keyword>
<keyword id="KW-1185">Reference proteome</keyword>
<keyword id="KW-0812">Transmembrane</keyword>
<keyword id="KW-1133">Transmembrane helix</keyword>
<keyword id="KW-0813">Transport</keyword>
<feature type="chain" id="PRO_0000210829" description="Fe(2+) transporter FeoB">
    <location>
        <begin position="1"/>
        <end position="613"/>
    </location>
</feature>
<feature type="transmembrane region" description="Helical" evidence="2">
    <location>
        <begin position="220"/>
        <end position="240"/>
    </location>
</feature>
<feature type="transmembrane region" description="Helical" evidence="2">
    <location>
        <begin position="266"/>
        <end position="288"/>
    </location>
</feature>
<feature type="transmembrane region" description="Helical" evidence="2">
    <location>
        <begin position="290"/>
        <end position="312"/>
    </location>
</feature>
<feature type="transmembrane region" description="Helical" evidence="2">
    <location>
        <begin position="322"/>
        <end position="342"/>
    </location>
</feature>
<feature type="transmembrane region" description="Helical" evidence="2">
    <location>
        <begin position="357"/>
        <end position="377"/>
    </location>
</feature>
<feature type="transmembrane region" description="Helical" evidence="2">
    <location>
        <begin position="387"/>
        <end position="407"/>
    </location>
</feature>
<feature type="transmembrane region" description="Helical" evidence="2">
    <location>
        <begin position="444"/>
        <end position="464"/>
    </location>
</feature>
<feature type="transmembrane region" description="Helical" evidence="2">
    <location>
        <begin position="510"/>
        <end position="530"/>
    </location>
</feature>
<feature type="transmembrane region" description="Helical" evidence="2">
    <location>
        <begin position="556"/>
        <end position="576"/>
    </location>
</feature>
<feature type="transmembrane region" description="Helical" evidence="2">
    <location>
        <begin position="587"/>
        <end position="607"/>
    </location>
</feature>
<feature type="domain" description="FeoB-type G" evidence="3">
    <location>
        <begin position="3"/>
        <end position="165"/>
    </location>
</feature>
<feature type="binding site" evidence="3">
    <location>
        <begin position="10"/>
        <end position="17"/>
    </location>
    <ligand>
        <name>GTP</name>
        <dbReference type="ChEBI" id="CHEBI:37565"/>
        <label>1</label>
    </ligand>
</feature>
<feature type="binding site" evidence="3">
    <location>
        <begin position="35"/>
        <end position="39"/>
    </location>
    <ligand>
        <name>GTP</name>
        <dbReference type="ChEBI" id="CHEBI:37565"/>
        <label>2</label>
    </ligand>
</feature>
<feature type="binding site" evidence="3">
    <location>
        <begin position="56"/>
        <end position="59"/>
    </location>
    <ligand>
        <name>GTP</name>
        <dbReference type="ChEBI" id="CHEBI:37565"/>
        <label>3</label>
    </ligand>
</feature>
<feature type="binding site" evidence="3">
    <location>
        <begin position="116"/>
        <end position="119"/>
    </location>
    <ligand>
        <name>GTP</name>
        <dbReference type="ChEBI" id="CHEBI:37565"/>
    </ligand>
</feature>
<feature type="binding site" evidence="3">
    <location>
        <begin position="145"/>
        <end position="147"/>
    </location>
    <ligand>
        <name>GTP</name>
        <dbReference type="ChEBI" id="CHEBI:37565"/>
    </ligand>
</feature>
<feature type="sequence variant" description="In strain: F38011.">
    <original>I</original>
    <variation>V</variation>
    <location>
        <position position="132"/>
    </location>
</feature>
<feature type="sequence variant" description="In strain: F38011 and M129.">
    <original>T</original>
    <variation>A</variation>
    <location>
        <position position="254"/>
    </location>
</feature>
<feature type="sequence variant" description="In strain: M129.">
    <original>F</original>
    <variation>L</variation>
    <location>
        <position position="258"/>
    </location>
</feature>
<feature type="sequence variant" description="In strain: M129.">
    <original>M</original>
    <variation>I</variation>
    <location>
        <position position="291"/>
    </location>
</feature>
<feature type="sequence variant" description="In strain: M129.">
    <original>S</original>
    <variation>N</variation>
    <location>
        <position position="469"/>
    </location>
</feature>
<feature type="sequence variant" description="In strain: F38011 and M129.">
    <original>Q</original>
    <variation>K</variation>
    <location>
        <position position="500"/>
    </location>
</feature>
<feature type="sequence variant" description="In strain: M129.">
    <original>L</original>
    <variation>F</variation>
    <location>
        <position position="605"/>
    </location>
</feature>
<name>FEOB_CAMJE</name>